<feature type="chain" id="PRO_0000179318" description="Trigger factor">
    <location>
        <begin position="1"/>
        <end position="436"/>
    </location>
</feature>
<feature type="domain" description="PPIase FKBP-type" evidence="1">
    <location>
        <begin position="163"/>
        <end position="248"/>
    </location>
</feature>
<sequence>MQPVVETLSGLERRVDLAVSVAEVEKEVQAQLKRVGRTAKVAGFRPGKAPLAMLERSHGPGIRYDVINSLVGRAFEQAVDGAKLRVAGSPTLTPKTEGVADDTLAFTATFEVYPEVTVPDLSALAVTRYDTPVTDAEVNQTLDVLRKQRAKFETREGRASQDGDRVVLDFAGTIDGVPFEGGKAEDFPFVLGQGRMLPEFEEAALGLKAGESKVFPLKFPDDYQGKEVAGKTAEFTITVKEVAEGVLPEVDAEFAKSLGQAEGDVEKLKADIRTNIEREVKARLQGRTKGSVMDALVEAGKFDVPKALVDSDVEGRIAAAREELKQRGVPNADSVPMPAEVFSTESERRVRLGLLVSELVKQAQLQAKPEQVRARIEEFAQNYEQPAQVVSYYLADRQRRAEIEAIVLEDNVVAHVLENAKVADEKVPFDQLMGMA</sequence>
<accession>Q7WK84</accession>
<dbReference type="EC" id="5.2.1.8" evidence="1"/>
<dbReference type="EMBL" id="BX640443">
    <property type="protein sequence ID" value="CAE32749.1"/>
    <property type="molecule type" value="Genomic_DNA"/>
</dbReference>
<dbReference type="RefSeq" id="WP_003812510.1">
    <property type="nucleotide sequence ID" value="NC_002927.3"/>
</dbReference>
<dbReference type="SMR" id="Q7WK84"/>
<dbReference type="GeneID" id="56478368"/>
<dbReference type="KEGG" id="bbr:BB2253"/>
<dbReference type="eggNOG" id="COG0544">
    <property type="taxonomic scope" value="Bacteria"/>
</dbReference>
<dbReference type="HOGENOM" id="CLU_033058_2_0_4"/>
<dbReference type="Proteomes" id="UP000001027">
    <property type="component" value="Chromosome"/>
</dbReference>
<dbReference type="GO" id="GO:0005737">
    <property type="term" value="C:cytoplasm"/>
    <property type="evidence" value="ECO:0007669"/>
    <property type="project" value="UniProtKB-SubCell"/>
</dbReference>
<dbReference type="GO" id="GO:0003755">
    <property type="term" value="F:peptidyl-prolyl cis-trans isomerase activity"/>
    <property type="evidence" value="ECO:0007669"/>
    <property type="project" value="UniProtKB-UniRule"/>
</dbReference>
<dbReference type="GO" id="GO:0044183">
    <property type="term" value="F:protein folding chaperone"/>
    <property type="evidence" value="ECO:0007669"/>
    <property type="project" value="TreeGrafter"/>
</dbReference>
<dbReference type="GO" id="GO:0043022">
    <property type="term" value="F:ribosome binding"/>
    <property type="evidence" value="ECO:0007669"/>
    <property type="project" value="TreeGrafter"/>
</dbReference>
<dbReference type="GO" id="GO:0051083">
    <property type="term" value="P:'de novo' cotranslational protein folding"/>
    <property type="evidence" value="ECO:0007669"/>
    <property type="project" value="TreeGrafter"/>
</dbReference>
<dbReference type="GO" id="GO:0051301">
    <property type="term" value="P:cell division"/>
    <property type="evidence" value="ECO:0007669"/>
    <property type="project" value="UniProtKB-KW"/>
</dbReference>
<dbReference type="GO" id="GO:0061077">
    <property type="term" value="P:chaperone-mediated protein folding"/>
    <property type="evidence" value="ECO:0007669"/>
    <property type="project" value="TreeGrafter"/>
</dbReference>
<dbReference type="GO" id="GO:0015031">
    <property type="term" value="P:protein transport"/>
    <property type="evidence" value="ECO:0007669"/>
    <property type="project" value="UniProtKB-UniRule"/>
</dbReference>
<dbReference type="GO" id="GO:0043335">
    <property type="term" value="P:protein unfolding"/>
    <property type="evidence" value="ECO:0007669"/>
    <property type="project" value="TreeGrafter"/>
</dbReference>
<dbReference type="FunFam" id="3.10.50.40:FF:000001">
    <property type="entry name" value="Trigger factor"/>
    <property type="match status" value="1"/>
</dbReference>
<dbReference type="Gene3D" id="3.10.50.40">
    <property type="match status" value="1"/>
</dbReference>
<dbReference type="Gene3D" id="3.30.70.1050">
    <property type="entry name" value="Trigger factor ribosome-binding domain"/>
    <property type="match status" value="1"/>
</dbReference>
<dbReference type="Gene3D" id="1.10.3120.10">
    <property type="entry name" value="Trigger factor, C-terminal domain"/>
    <property type="match status" value="1"/>
</dbReference>
<dbReference type="HAMAP" id="MF_00303">
    <property type="entry name" value="Trigger_factor_Tig"/>
    <property type="match status" value="1"/>
</dbReference>
<dbReference type="InterPro" id="IPR046357">
    <property type="entry name" value="PPIase_dom_sf"/>
</dbReference>
<dbReference type="InterPro" id="IPR001179">
    <property type="entry name" value="PPIase_FKBP_dom"/>
</dbReference>
<dbReference type="InterPro" id="IPR005215">
    <property type="entry name" value="Trig_fac"/>
</dbReference>
<dbReference type="InterPro" id="IPR008880">
    <property type="entry name" value="Trigger_fac_C"/>
</dbReference>
<dbReference type="InterPro" id="IPR037041">
    <property type="entry name" value="Trigger_fac_C_sf"/>
</dbReference>
<dbReference type="InterPro" id="IPR008881">
    <property type="entry name" value="Trigger_fac_ribosome-bd_bac"/>
</dbReference>
<dbReference type="InterPro" id="IPR036611">
    <property type="entry name" value="Trigger_fac_ribosome-bd_sf"/>
</dbReference>
<dbReference type="InterPro" id="IPR027304">
    <property type="entry name" value="Trigger_fact/SurA_dom_sf"/>
</dbReference>
<dbReference type="NCBIfam" id="TIGR00115">
    <property type="entry name" value="tig"/>
    <property type="match status" value="1"/>
</dbReference>
<dbReference type="PANTHER" id="PTHR30560">
    <property type="entry name" value="TRIGGER FACTOR CHAPERONE AND PEPTIDYL-PROLYL CIS/TRANS ISOMERASE"/>
    <property type="match status" value="1"/>
</dbReference>
<dbReference type="PANTHER" id="PTHR30560:SF3">
    <property type="entry name" value="TRIGGER FACTOR-LIKE PROTEIN TIG, CHLOROPLASTIC"/>
    <property type="match status" value="1"/>
</dbReference>
<dbReference type="Pfam" id="PF00254">
    <property type="entry name" value="FKBP_C"/>
    <property type="match status" value="1"/>
</dbReference>
<dbReference type="Pfam" id="PF05698">
    <property type="entry name" value="Trigger_C"/>
    <property type="match status" value="1"/>
</dbReference>
<dbReference type="Pfam" id="PF05697">
    <property type="entry name" value="Trigger_N"/>
    <property type="match status" value="1"/>
</dbReference>
<dbReference type="PIRSF" id="PIRSF003095">
    <property type="entry name" value="Trigger_factor"/>
    <property type="match status" value="1"/>
</dbReference>
<dbReference type="SUPFAM" id="SSF54534">
    <property type="entry name" value="FKBP-like"/>
    <property type="match status" value="1"/>
</dbReference>
<dbReference type="SUPFAM" id="SSF109998">
    <property type="entry name" value="Triger factor/SurA peptide-binding domain-like"/>
    <property type="match status" value="1"/>
</dbReference>
<dbReference type="SUPFAM" id="SSF102735">
    <property type="entry name" value="Trigger factor ribosome-binding domain"/>
    <property type="match status" value="1"/>
</dbReference>
<dbReference type="PROSITE" id="PS50059">
    <property type="entry name" value="FKBP_PPIASE"/>
    <property type="match status" value="1"/>
</dbReference>
<evidence type="ECO:0000255" key="1">
    <source>
        <dbReference type="HAMAP-Rule" id="MF_00303"/>
    </source>
</evidence>
<comment type="function">
    <text evidence="1">Involved in protein export. Acts as a chaperone by maintaining the newly synthesized protein in an open conformation. Functions as a peptidyl-prolyl cis-trans isomerase.</text>
</comment>
<comment type="catalytic activity">
    <reaction evidence="1">
        <text>[protein]-peptidylproline (omega=180) = [protein]-peptidylproline (omega=0)</text>
        <dbReference type="Rhea" id="RHEA:16237"/>
        <dbReference type="Rhea" id="RHEA-COMP:10747"/>
        <dbReference type="Rhea" id="RHEA-COMP:10748"/>
        <dbReference type="ChEBI" id="CHEBI:83833"/>
        <dbReference type="ChEBI" id="CHEBI:83834"/>
        <dbReference type="EC" id="5.2.1.8"/>
    </reaction>
</comment>
<comment type="subcellular location">
    <subcellularLocation>
        <location>Cytoplasm</location>
    </subcellularLocation>
    <text evidence="1">About half TF is bound to the ribosome near the polypeptide exit tunnel while the other half is free in the cytoplasm.</text>
</comment>
<comment type="domain">
    <text evidence="1">Consists of 3 domains; the N-terminus binds the ribosome, the middle domain has PPIase activity, while the C-terminus has intrinsic chaperone activity on its own.</text>
</comment>
<comment type="similarity">
    <text evidence="1">Belongs to the FKBP-type PPIase family. Tig subfamily.</text>
</comment>
<name>TIG_BORBR</name>
<proteinExistence type="inferred from homology"/>
<gene>
    <name evidence="1" type="primary">tig</name>
    <name type="ordered locus">BB2253</name>
</gene>
<protein>
    <recommendedName>
        <fullName evidence="1">Trigger factor</fullName>
        <shortName evidence="1">TF</shortName>
        <ecNumber evidence="1">5.2.1.8</ecNumber>
    </recommendedName>
    <alternativeName>
        <fullName evidence="1">PPIase</fullName>
    </alternativeName>
</protein>
<reference key="1">
    <citation type="journal article" date="2003" name="Nat. Genet.">
        <title>Comparative analysis of the genome sequences of Bordetella pertussis, Bordetella parapertussis and Bordetella bronchiseptica.</title>
        <authorList>
            <person name="Parkhill J."/>
            <person name="Sebaihia M."/>
            <person name="Preston A."/>
            <person name="Murphy L.D."/>
            <person name="Thomson N.R."/>
            <person name="Harris D.E."/>
            <person name="Holden M.T.G."/>
            <person name="Churcher C.M."/>
            <person name="Bentley S.D."/>
            <person name="Mungall K.L."/>
            <person name="Cerdeno-Tarraga A.-M."/>
            <person name="Temple L."/>
            <person name="James K.D."/>
            <person name="Harris B."/>
            <person name="Quail M.A."/>
            <person name="Achtman M."/>
            <person name="Atkin R."/>
            <person name="Baker S."/>
            <person name="Basham D."/>
            <person name="Bason N."/>
            <person name="Cherevach I."/>
            <person name="Chillingworth T."/>
            <person name="Collins M."/>
            <person name="Cronin A."/>
            <person name="Davis P."/>
            <person name="Doggett J."/>
            <person name="Feltwell T."/>
            <person name="Goble A."/>
            <person name="Hamlin N."/>
            <person name="Hauser H."/>
            <person name="Holroyd S."/>
            <person name="Jagels K."/>
            <person name="Leather S."/>
            <person name="Moule S."/>
            <person name="Norberczak H."/>
            <person name="O'Neil S."/>
            <person name="Ormond D."/>
            <person name="Price C."/>
            <person name="Rabbinowitsch E."/>
            <person name="Rutter S."/>
            <person name="Sanders M."/>
            <person name="Saunders D."/>
            <person name="Seeger K."/>
            <person name="Sharp S."/>
            <person name="Simmonds M."/>
            <person name="Skelton J."/>
            <person name="Squares R."/>
            <person name="Squares S."/>
            <person name="Stevens K."/>
            <person name="Unwin L."/>
            <person name="Whitehead S."/>
            <person name="Barrell B.G."/>
            <person name="Maskell D.J."/>
        </authorList>
    </citation>
    <scope>NUCLEOTIDE SEQUENCE [LARGE SCALE GENOMIC DNA]</scope>
    <source>
        <strain>ATCC BAA-588 / NCTC 13252 / RB50</strain>
    </source>
</reference>
<organism>
    <name type="scientific">Bordetella bronchiseptica (strain ATCC BAA-588 / NCTC 13252 / RB50)</name>
    <name type="common">Alcaligenes bronchisepticus</name>
    <dbReference type="NCBI Taxonomy" id="257310"/>
    <lineage>
        <taxon>Bacteria</taxon>
        <taxon>Pseudomonadati</taxon>
        <taxon>Pseudomonadota</taxon>
        <taxon>Betaproteobacteria</taxon>
        <taxon>Burkholderiales</taxon>
        <taxon>Alcaligenaceae</taxon>
        <taxon>Bordetella</taxon>
    </lineage>
</organism>
<keyword id="KW-0131">Cell cycle</keyword>
<keyword id="KW-0132">Cell division</keyword>
<keyword id="KW-0143">Chaperone</keyword>
<keyword id="KW-0963">Cytoplasm</keyword>
<keyword id="KW-0413">Isomerase</keyword>
<keyword id="KW-0697">Rotamase</keyword>